<organism>
    <name type="scientific">Saccharolobus islandicus (strain L.S.2.15 / Lassen #1)</name>
    <name type="common">Sulfolobus islandicus</name>
    <dbReference type="NCBI Taxonomy" id="429572"/>
    <lineage>
        <taxon>Archaea</taxon>
        <taxon>Thermoproteota</taxon>
        <taxon>Thermoprotei</taxon>
        <taxon>Sulfolobales</taxon>
        <taxon>Sulfolobaceae</taxon>
        <taxon>Saccharolobus</taxon>
    </lineage>
</organism>
<comment type="function">
    <text evidence="1">Catalyzes the excision of an oxidatively damaged form of guanine (7,8-dihydro-8-oxoguanine = 8-oxoG) from DNA. Also cleaves the DNA backbone at apurinic/apyrimidinic sites (AP sites).</text>
</comment>
<comment type="catalytic activity">
    <reaction evidence="1">
        <text>2'-deoxyribonucleotide-(2'-deoxyribose 5'-phosphate)-2'-deoxyribonucleotide-DNA = a 3'-end 2'-deoxyribonucleotide-(2,3-dehydro-2,3-deoxyribose 5'-phosphate)-DNA + a 5'-end 5'-phospho-2'-deoxyribonucleoside-DNA + H(+)</text>
        <dbReference type="Rhea" id="RHEA:66592"/>
        <dbReference type="Rhea" id="RHEA-COMP:13180"/>
        <dbReference type="Rhea" id="RHEA-COMP:16897"/>
        <dbReference type="Rhea" id="RHEA-COMP:17067"/>
        <dbReference type="ChEBI" id="CHEBI:15378"/>
        <dbReference type="ChEBI" id="CHEBI:136412"/>
        <dbReference type="ChEBI" id="CHEBI:157695"/>
        <dbReference type="ChEBI" id="CHEBI:167181"/>
        <dbReference type="EC" id="4.2.99.18"/>
    </reaction>
</comment>
<comment type="similarity">
    <text evidence="1">Belongs to the type-2 OGG1 family.</text>
</comment>
<feature type="chain" id="PRO_1000204471" description="8-oxoguanine DNA glycosylase/AP lyase">
    <location>
        <begin position="1"/>
        <end position="207"/>
    </location>
</feature>
<feature type="active site" evidence="1">
    <location>
        <position position="128"/>
    </location>
</feature>
<feature type="active site" evidence="1">
    <location>
        <position position="146"/>
    </location>
</feature>
<feature type="site" description="Important for guanine/8-oxoguanine distinction" evidence="1">
    <location>
        <position position="207"/>
    </location>
</feature>
<name>OGG1_SACI2</name>
<proteinExistence type="inferred from homology"/>
<accession>C3MPU9</accession>
<evidence type="ECO:0000255" key="1">
    <source>
        <dbReference type="HAMAP-Rule" id="MF_00241"/>
    </source>
</evidence>
<protein>
    <recommendedName>
        <fullName evidence="1">8-oxoguanine DNA glycosylase/AP lyase</fullName>
    </recommendedName>
    <domain>
        <recommendedName>
            <fullName evidence="1">8-oxoguanine DNA glycosylase</fullName>
            <shortName evidence="1">8-oxoG DNA glycosylase</shortName>
            <ecNumber evidence="1">3.2.2.-</ecNumber>
        </recommendedName>
    </domain>
    <domain>
        <recommendedName>
            <fullName evidence="1">DNA-(apurinic or apyrimidinic site) lyase</fullName>
            <shortName evidence="1">AP lyase</shortName>
            <ecNumber evidence="1">4.2.99.18</ecNumber>
        </recommendedName>
    </domain>
</protein>
<keyword id="KW-0227">DNA damage</keyword>
<keyword id="KW-0234">DNA repair</keyword>
<keyword id="KW-0326">Glycosidase</keyword>
<keyword id="KW-0378">Hydrolase</keyword>
<keyword id="KW-0456">Lyase</keyword>
<keyword id="KW-0511">Multifunctional enzyme</keyword>
<gene>
    <name evidence="1" type="primary">ogg</name>
    <name type="ordered locus">LS215_1404</name>
</gene>
<dbReference type="EC" id="3.2.2.-" evidence="1"/>
<dbReference type="EC" id="4.2.99.18" evidence="1"/>
<dbReference type="EMBL" id="CP001399">
    <property type="protein sequence ID" value="ACP35412.1"/>
    <property type="molecule type" value="Genomic_DNA"/>
</dbReference>
<dbReference type="RefSeq" id="WP_012711322.1">
    <property type="nucleotide sequence ID" value="NC_012589.1"/>
</dbReference>
<dbReference type="SMR" id="C3MPU9"/>
<dbReference type="KEGG" id="sis:LS215_1404"/>
<dbReference type="HOGENOM" id="CLU_104937_0_0_2"/>
<dbReference type="OrthoDB" id="35941at2157"/>
<dbReference type="Proteomes" id="UP000001747">
    <property type="component" value="Chromosome"/>
</dbReference>
<dbReference type="GO" id="GO:0140078">
    <property type="term" value="F:class I DNA-(apurinic or apyrimidinic site) endonuclease activity"/>
    <property type="evidence" value="ECO:0007669"/>
    <property type="project" value="UniProtKB-EC"/>
</dbReference>
<dbReference type="GO" id="GO:0016799">
    <property type="term" value="F:hydrolase activity, hydrolyzing N-glycosyl compounds"/>
    <property type="evidence" value="ECO:0007669"/>
    <property type="project" value="UniProtKB-UniRule"/>
</dbReference>
<dbReference type="GO" id="GO:0006284">
    <property type="term" value="P:base-excision repair"/>
    <property type="evidence" value="ECO:0007669"/>
    <property type="project" value="UniProtKB-UniRule"/>
</dbReference>
<dbReference type="CDD" id="cd00056">
    <property type="entry name" value="ENDO3c"/>
    <property type="match status" value="1"/>
</dbReference>
<dbReference type="Gene3D" id="1.10.1670.10">
    <property type="entry name" value="Helix-hairpin-Helix base-excision DNA repair enzymes (C-terminal)"/>
    <property type="match status" value="1"/>
</dbReference>
<dbReference type="Gene3D" id="1.10.340.30">
    <property type="entry name" value="Hypothetical protein, domain 2"/>
    <property type="match status" value="1"/>
</dbReference>
<dbReference type="HAMAP" id="MF_00241">
    <property type="entry name" value="Ogg"/>
    <property type="match status" value="1"/>
</dbReference>
<dbReference type="InterPro" id="IPR012092">
    <property type="entry name" value="DNA_glyclase/AP_lyase_Ogg"/>
</dbReference>
<dbReference type="InterPro" id="IPR011257">
    <property type="entry name" value="DNA_glycosylase"/>
</dbReference>
<dbReference type="InterPro" id="IPR003265">
    <property type="entry name" value="HhH-GPD_domain"/>
</dbReference>
<dbReference type="InterPro" id="IPR023170">
    <property type="entry name" value="HhH_base_excis_C"/>
</dbReference>
<dbReference type="NCBIfam" id="NF002305">
    <property type="entry name" value="PRK01229.1"/>
    <property type="match status" value="1"/>
</dbReference>
<dbReference type="Pfam" id="PF22175">
    <property type="entry name" value="Ogg-HhH"/>
    <property type="match status" value="1"/>
</dbReference>
<dbReference type="PIRSF" id="PIRSF005954">
    <property type="entry name" value="Thrmst_ogg"/>
    <property type="match status" value="1"/>
</dbReference>
<dbReference type="SMART" id="SM00478">
    <property type="entry name" value="ENDO3c"/>
    <property type="match status" value="1"/>
</dbReference>
<dbReference type="SUPFAM" id="SSF48150">
    <property type="entry name" value="DNA-glycosylase"/>
    <property type="match status" value="1"/>
</dbReference>
<sequence>MLRSLVQNPRVRARVLERVDEFRLNNLSNEEVWFRELTLCLLTANSSFISAYQALNCLGDKIYYANEEVIRSILKSCKYRFYNLKAKYIIMAREKVYGKLKEEITPLADSDQQLAREKLLNIKGIGMKEASHFLRNVGYFDLAIIDRHLIDFMRRIGAIGETNVKHLSKSRYISLESVLKSIALNLNISVGILDLFIWYKETNTIVK</sequence>
<reference key="1">
    <citation type="journal article" date="2009" name="Proc. Natl. Acad. Sci. U.S.A.">
        <title>Biogeography of the Sulfolobus islandicus pan-genome.</title>
        <authorList>
            <person name="Reno M.L."/>
            <person name="Held N.L."/>
            <person name="Fields C.J."/>
            <person name="Burke P.V."/>
            <person name="Whitaker R.J."/>
        </authorList>
    </citation>
    <scope>NUCLEOTIDE SEQUENCE [LARGE SCALE GENOMIC DNA]</scope>
    <source>
        <strain>L.S.2.15 / Lassen #1</strain>
    </source>
</reference>